<sequence>MDLTKLTAHELKDMLSNKEVKAEEITKAFLDRINLVDNKLGAYLYVSEEEAIKKAKEIDVKIEKNEELKALSGIPVGIKDNINVKGMQNTCASKILEGYTSPYDAHVTEKIKQEEGIILGKLNMDEFAMGSSTENSAFKLAKNPWDLERVPGGSSGGSAVAVAGSEATLSLGTDTGGSVRQPASFCGVVGLKPTYGRISRSGVVAFGSTLDQVGPMGKDVEDCALLTSAIAGLDKKDFTTADKEVPDYKKSLTKDIKGKRIGIPKEFFGDGLDKNVRKSVEEAIKVLEANGAEVKPCSLPLMDYALSAYYIISSAEASSNLARFDGIRYGYRSKNFKDAKDIYLKSRSEGFGDEVKRRIMLGTYVLSAGYYDAYYKKALKVRKLIKDDFQRVFKEFDAIVSPTSPTTAFKVGEKKDDVMSMYLSDIYTVPISVAGVPAISLPCGMVDGLPVGLQIISDYFKEDVLFNLAYNYEQSVDFHKMRADF</sequence>
<name>GATA_CLOBL</name>
<keyword id="KW-0067">ATP-binding</keyword>
<keyword id="KW-0436">Ligase</keyword>
<keyword id="KW-0547">Nucleotide-binding</keyword>
<keyword id="KW-0648">Protein biosynthesis</keyword>
<reference key="1">
    <citation type="submission" date="2007-06" db="EMBL/GenBank/DDBJ databases">
        <authorList>
            <person name="Brinkac L.M."/>
            <person name="Daugherty S."/>
            <person name="Dodson R.J."/>
            <person name="Madupu R."/>
            <person name="Brown J.L."/>
            <person name="Bruce D."/>
            <person name="Detter C."/>
            <person name="Munk C."/>
            <person name="Smith L.A."/>
            <person name="Smith T.J."/>
            <person name="White O."/>
            <person name="Brettin T.S."/>
        </authorList>
    </citation>
    <scope>NUCLEOTIDE SEQUENCE [LARGE SCALE GENOMIC DNA]</scope>
    <source>
        <strain>Langeland / NCTC 10281 / Type F</strain>
    </source>
</reference>
<protein>
    <recommendedName>
        <fullName evidence="1">Glutamyl-tRNA(Gln) amidotransferase subunit A</fullName>
        <shortName evidence="1">Glu-ADT subunit A</shortName>
        <ecNumber evidence="1">6.3.5.7</ecNumber>
    </recommendedName>
</protein>
<proteinExistence type="inferred from homology"/>
<comment type="function">
    <text evidence="1">Allows the formation of correctly charged Gln-tRNA(Gln) through the transamidation of misacylated Glu-tRNA(Gln) in organisms which lack glutaminyl-tRNA synthetase. The reaction takes place in the presence of glutamine and ATP through an activated gamma-phospho-Glu-tRNA(Gln).</text>
</comment>
<comment type="catalytic activity">
    <reaction evidence="1">
        <text>L-glutamyl-tRNA(Gln) + L-glutamine + ATP + H2O = L-glutaminyl-tRNA(Gln) + L-glutamate + ADP + phosphate + H(+)</text>
        <dbReference type="Rhea" id="RHEA:17521"/>
        <dbReference type="Rhea" id="RHEA-COMP:9681"/>
        <dbReference type="Rhea" id="RHEA-COMP:9684"/>
        <dbReference type="ChEBI" id="CHEBI:15377"/>
        <dbReference type="ChEBI" id="CHEBI:15378"/>
        <dbReference type="ChEBI" id="CHEBI:29985"/>
        <dbReference type="ChEBI" id="CHEBI:30616"/>
        <dbReference type="ChEBI" id="CHEBI:43474"/>
        <dbReference type="ChEBI" id="CHEBI:58359"/>
        <dbReference type="ChEBI" id="CHEBI:78520"/>
        <dbReference type="ChEBI" id="CHEBI:78521"/>
        <dbReference type="ChEBI" id="CHEBI:456216"/>
        <dbReference type="EC" id="6.3.5.7"/>
    </reaction>
</comment>
<comment type="subunit">
    <text evidence="1">Heterotrimer of A, B and C subunits.</text>
</comment>
<comment type="similarity">
    <text evidence="1">Belongs to the amidase family. GatA subfamily.</text>
</comment>
<organism>
    <name type="scientific">Clostridium botulinum (strain Langeland / NCTC 10281 / Type F)</name>
    <dbReference type="NCBI Taxonomy" id="441772"/>
    <lineage>
        <taxon>Bacteria</taxon>
        <taxon>Bacillati</taxon>
        <taxon>Bacillota</taxon>
        <taxon>Clostridia</taxon>
        <taxon>Eubacteriales</taxon>
        <taxon>Clostridiaceae</taxon>
        <taxon>Clostridium</taxon>
    </lineage>
</organism>
<accession>A7GIK2</accession>
<gene>
    <name evidence="1" type="primary">gatA</name>
    <name type="ordered locus">CLI_3437</name>
</gene>
<evidence type="ECO:0000255" key="1">
    <source>
        <dbReference type="HAMAP-Rule" id="MF_00120"/>
    </source>
</evidence>
<dbReference type="EC" id="6.3.5.7" evidence="1"/>
<dbReference type="EMBL" id="CP000728">
    <property type="protein sequence ID" value="ABS41429.1"/>
    <property type="molecule type" value="Genomic_DNA"/>
</dbReference>
<dbReference type="RefSeq" id="WP_012100998.1">
    <property type="nucleotide sequence ID" value="NC_009699.1"/>
</dbReference>
<dbReference type="SMR" id="A7GIK2"/>
<dbReference type="KEGG" id="cbf:CLI_3437"/>
<dbReference type="HOGENOM" id="CLU_009600_0_3_9"/>
<dbReference type="Proteomes" id="UP000002410">
    <property type="component" value="Chromosome"/>
</dbReference>
<dbReference type="GO" id="GO:0030956">
    <property type="term" value="C:glutamyl-tRNA(Gln) amidotransferase complex"/>
    <property type="evidence" value="ECO:0007669"/>
    <property type="project" value="InterPro"/>
</dbReference>
<dbReference type="GO" id="GO:0005524">
    <property type="term" value="F:ATP binding"/>
    <property type="evidence" value="ECO:0007669"/>
    <property type="project" value="UniProtKB-KW"/>
</dbReference>
<dbReference type="GO" id="GO:0050567">
    <property type="term" value="F:glutaminyl-tRNA synthase (glutamine-hydrolyzing) activity"/>
    <property type="evidence" value="ECO:0007669"/>
    <property type="project" value="UniProtKB-UniRule"/>
</dbReference>
<dbReference type="GO" id="GO:0006412">
    <property type="term" value="P:translation"/>
    <property type="evidence" value="ECO:0007669"/>
    <property type="project" value="UniProtKB-UniRule"/>
</dbReference>
<dbReference type="Gene3D" id="3.90.1300.10">
    <property type="entry name" value="Amidase signature (AS) domain"/>
    <property type="match status" value="1"/>
</dbReference>
<dbReference type="HAMAP" id="MF_00120">
    <property type="entry name" value="GatA"/>
    <property type="match status" value="1"/>
</dbReference>
<dbReference type="InterPro" id="IPR000120">
    <property type="entry name" value="Amidase"/>
</dbReference>
<dbReference type="InterPro" id="IPR020556">
    <property type="entry name" value="Amidase_CS"/>
</dbReference>
<dbReference type="InterPro" id="IPR023631">
    <property type="entry name" value="Amidase_dom"/>
</dbReference>
<dbReference type="InterPro" id="IPR036928">
    <property type="entry name" value="AS_sf"/>
</dbReference>
<dbReference type="InterPro" id="IPR004412">
    <property type="entry name" value="GatA"/>
</dbReference>
<dbReference type="NCBIfam" id="TIGR00132">
    <property type="entry name" value="gatA"/>
    <property type="match status" value="1"/>
</dbReference>
<dbReference type="PANTHER" id="PTHR11895:SF151">
    <property type="entry name" value="GLUTAMYL-TRNA(GLN) AMIDOTRANSFERASE SUBUNIT A"/>
    <property type="match status" value="1"/>
</dbReference>
<dbReference type="PANTHER" id="PTHR11895">
    <property type="entry name" value="TRANSAMIDASE"/>
    <property type="match status" value="1"/>
</dbReference>
<dbReference type="Pfam" id="PF01425">
    <property type="entry name" value="Amidase"/>
    <property type="match status" value="1"/>
</dbReference>
<dbReference type="SUPFAM" id="SSF75304">
    <property type="entry name" value="Amidase signature (AS) enzymes"/>
    <property type="match status" value="1"/>
</dbReference>
<dbReference type="PROSITE" id="PS00571">
    <property type="entry name" value="AMIDASES"/>
    <property type="match status" value="1"/>
</dbReference>
<feature type="chain" id="PRO_1000015824" description="Glutamyl-tRNA(Gln) amidotransferase subunit A">
    <location>
        <begin position="1"/>
        <end position="485"/>
    </location>
</feature>
<feature type="active site" description="Charge relay system" evidence="1">
    <location>
        <position position="79"/>
    </location>
</feature>
<feature type="active site" description="Charge relay system" evidence="1">
    <location>
        <position position="154"/>
    </location>
</feature>
<feature type="active site" description="Acyl-ester intermediate" evidence="1">
    <location>
        <position position="178"/>
    </location>
</feature>